<dbReference type="EMBL" id="CP001138">
    <property type="protein sequence ID" value="ACH48851.1"/>
    <property type="molecule type" value="Genomic_DNA"/>
</dbReference>
<dbReference type="RefSeq" id="WP_000999959.1">
    <property type="nucleotide sequence ID" value="NC_011149.1"/>
</dbReference>
<dbReference type="SMR" id="B5EZ64"/>
<dbReference type="KEGG" id="sea:SeAg_B4170"/>
<dbReference type="HOGENOM" id="CLU_080880_3_0_6"/>
<dbReference type="Proteomes" id="UP000008819">
    <property type="component" value="Chromosome"/>
</dbReference>
<dbReference type="GO" id="GO:0005829">
    <property type="term" value="C:cytosol"/>
    <property type="evidence" value="ECO:0007669"/>
    <property type="project" value="TreeGrafter"/>
</dbReference>
<dbReference type="GO" id="GO:0008199">
    <property type="term" value="F:ferric iron binding"/>
    <property type="evidence" value="ECO:0007669"/>
    <property type="project" value="InterPro"/>
</dbReference>
<dbReference type="GO" id="GO:0008198">
    <property type="term" value="F:ferrous iron binding"/>
    <property type="evidence" value="ECO:0007669"/>
    <property type="project" value="TreeGrafter"/>
</dbReference>
<dbReference type="GO" id="GO:0016226">
    <property type="term" value="P:iron-sulfur cluster assembly"/>
    <property type="evidence" value="ECO:0007669"/>
    <property type="project" value="UniProtKB-UniRule"/>
</dbReference>
<dbReference type="CDD" id="cd00503">
    <property type="entry name" value="Frataxin"/>
    <property type="match status" value="1"/>
</dbReference>
<dbReference type="FunFam" id="3.30.920.10:FF:000001">
    <property type="entry name" value="Iron-sulfur cluster assembly protein CyaY"/>
    <property type="match status" value="1"/>
</dbReference>
<dbReference type="Gene3D" id="3.30.920.10">
    <property type="entry name" value="Frataxin/CyaY"/>
    <property type="match status" value="1"/>
</dbReference>
<dbReference type="HAMAP" id="MF_00142">
    <property type="entry name" value="CyaY"/>
    <property type="match status" value="1"/>
</dbReference>
<dbReference type="InterPro" id="IPR047584">
    <property type="entry name" value="CyaY"/>
</dbReference>
<dbReference type="InterPro" id="IPR002908">
    <property type="entry name" value="Frataxin/CyaY"/>
</dbReference>
<dbReference type="InterPro" id="IPR036524">
    <property type="entry name" value="Frataxin/CyaY_sf"/>
</dbReference>
<dbReference type="InterPro" id="IPR020895">
    <property type="entry name" value="Frataxin_CS"/>
</dbReference>
<dbReference type="NCBIfam" id="TIGR03421">
    <property type="entry name" value="FeS_CyaY"/>
    <property type="match status" value="1"/>
</dbReference>
<dbReference type="PANTHER" id="PTHR16821">
    <property type="entry name" value="FRATAXIN"/>
    <property type="match status" value="1"/>
</dbReference>
<dbReference type="PANTHER" id="PTHR16821:SF2">
    <property type="entry name" value="FRATAXIN, MITOCHONDRIAL"/>
    <property type="match status" value="1"/>
</dbReference>
<dbReference type="Pfam" id="PF01491">
    <property type="entry name" value="Frataxin_Cyay"/>
    <property type="match status" value="1"/>
</dbReference>
<dbReference type="SMART" id="SM01219">
    <property type="entry name" value="Frataxin_Cyay"/>
    <property type="match status" value="1"/>
</dbReference>
<dbReference type="SUPFAM" id="SSF55387">
    <property type="entry name" value="Frataxin/Nqo15-like"/>
    <property type="match status" value="1"/>
</dbReference>
<dbReference type="PROSITE" id="PS01344">
    <property type="entry name" value="FRATAXIN_1"/>
    <property type="match status" value="1"/>
</dbReference>
<dbReference type="PROSITE" id="PS50810">
    <property type="entry name" value="FRATAXIN_2"/>
    <property type="match status" value="1"/>
</dbReference>
<protein>
    <recommendedName>
        <fullName evidence="1">Iron-sulfur cluster assembly protein CyaY</fullName>
    </recommendedName>
</protein>
<organism>
    <name type="scientific">Salmonella agona (strain SL483)</name>
    <dbReference type="NCBI Taxonomy" id="454166"/>
    <lineage>
        <taxon>Bacteria</taxon>
        <taxon>Pseudomonadati</taxon>
        <taxon>Pseudomonadota</taxon>
        <taxon>Gammaproteobacteria</taxon>
        <taxon>Enterobacterales</taxon>
        <taxon>Enterobacteriaceae</taxon>
        <taxon>Salmonella</taxon>
    </lineage>
</organism>
<reference key="1">
    <citation type="journal article" date="2011" name="J. Bacteriol.">
        <title>Comparative genomics of 28 Salmonella enterica isolates: evidence for CRISPR-mediated adaptive sublineage evolution.</title>
        <authorList>
            <person name="Fricke W.F."/>
            <person name="Mammel M.K."/>
            <person name="McDermott P.F."/>
            <person name="Tartera C."/>
            <person name="White D.G."/>
            <person name="Leclerc J.E."/>
            <person name="Ravel J."/>
            <person name="Cebula T.A."/>
        </authorList>
    </citation>
    <scope>NUCLEOTIDE SEQUENCE [LARGE SCALE GENOMIC DNA]</scope>
    <source>
        <strain>SL483</strain>
    </source>
</reference>
<accession>B5EZ64</accession>
<gene>
    <name evidence="1" type="primary">cyaY</name>
    <name type="ordered locus">SeAg_B4170</name>
</gene>
<proteinExistence type="inferred from homology"/>
<evidence type="ECO:0000255" key="1">
    <source>
        <dbReference type="HAMAP-Rule" id="MF_00142"/>
    </source>
</evidence>
<name>CYAY_SALA4</name>
<sequence length="106" mass="12173">MNDSEFHRLADTLWLAIEERLDDWDGDSDIDCEINGGVLTISFENGSKIIINRQEPLHQVWLATKQGGYHFDLKGDEWVCDRSGETFWDLLEQAATQQAGEKVSFR</sequence>
<comment type="function">
    <text evidence="1">Involved in iron-sulfur (Fe-S) cluster assembly. May act as a regulator of Fe-S biogenesis.</text>
</comment>
<comment type="similarity">
    <text evidence="1">Belongs to the frataxin family.</text>
</comment>
<keyword id="KW-0408">Iron</keyword>
<keyword id="KW-0479">Metal-binding</keyword>
<feature type="chain" id="PRO_1000096251" description="Iron-sulfur cluster assembly protein CyaY">
    <location>
        <begin position="1"/>
        <end position="106"/>
    </location>
</feature>